<reference key="1">
    <citation type="journal article" date="1986" name="Mol. Gen. Genet.">
        <title>The tobacco mitochondrial ATPase subunit 9 gene is closely linked to an open reading frame for a ribosomal protein.</title>
        <authorList>
            <person name="Bland M.M."/>
            <person name="Levings C.S. III"/>
            <person name="Matzinger D.F."/>
        </authorList>
    </citation>
    <scope>NUCLEOTIDE SEQUENCE [GENOMIC DNA]</scope>
    <source>
        <strain>cv. Petit Havana SR1</strain>
        <tissue>Leaf</tissue>
    </source>
</reference>
<reference key="2">
    <citation type="journal article" date="1992" name="Nucleic Acids Res.">
        <title>RNA editing of the mitochondrial atp9 transcript from tobacco.</title>
        <authorList>
            <person name="Hernould M."/>
            <person name="Mouras A."/>
            <person name="Litvak S."/>
            <person name="Araya A."/>
        </authorList>
    </citation>
    <scope>NUCLEOTIDE SEQUENCE [MRNA]</scope>
    <scope>RNA EDITING</scope>
</reference>
<sequence>MLEGAKLMGAGAATIALAGAAIGIGNVFSSLIHSVARNPSLAKQLFGYAILGFALTEAIALFALMMAFLISFVF</sequence>
<comment type="function">
    <text>This protein is one of the chains of the nonenzymatic membrane component (F0) of mitochondrial ATPase.</text>
</comment>
<comment type="subunit">
    <text>F-type ATPases have 2 components, CF(1) - the catalytic core - and CF(0) - the membrane proton channel. CF(1) has five subunits: alpha(3), beta(3), gamma(1), delta(1), epsilon(1). CF(0) has three main subunits: a, b and c.</text>
</comment>
<comment type="subcellular location">
    <subcellularLocation>
        <location evidence="4">Mitochondrion membrane</location>
        <topology evidence="4">Multi-pass membrane protein</topology>
    </subcellularLocation>
</comment>
<comment type="RNA editing">
    <location>
        <position position="7" evidence="3"/>
    </location>
    <location>
        <position position="17" evidence="3"/>
    </location>
    <location>
        <position position="28" evidence="3"/>
    </location>
    <location>
        <position position="31" evidence="3"/>
    </location>
    <location>
        <position position="61" evidence="3"/>
    </location>
    <location>
        <position position="64" evidence="3"/>
    </location>
    <location>
        <position position="71" evidence="3"/>
    </location>
    <location>
        <position position="75" evidence="3"/>
    </location>
    <text>The stop codon at position 75 is created by RNA editing.</text>
</comment>
<comment type="similarity">
    <text evidence="4">Belongs to the ATPase C chain family.</text>
</comment>
<evidence type="ECO:0000250" key="1"/>
<evidence type="ECO:0000255" key="2"/>
<evidence type="ECO:0000269" key="3">
    <source>
    </source>
</evidence>
<evidence type="ECO:0000305" key="4"/>
<gene>
    <name type="primary">ATP9</name>
</gene>
<geneLocation type="mitochondrion"/>
<keyword id="KW-0067">ATP-binding</keyword>
<keyword id="KW-0138">CF(0)</keyword>
<keyword id="KW-0375">Hydrogen ion transport</keyword>
<keyword id="KW-0406">Ion transport</keyword>
<keyword id="KW-0446">Lipid-binding</keyword>
<keyword id="KW-0472">Membrane</keyword>
<keyword id="KW-0496">Mitochondrion</keyword>
<keyword id="KW-0547">Nucleotide-binding</keyword>
<keyword id="KW-1185">Reference proteome</keyword>
<keyword id="KW-0691">RNA editing</keyword>
<keyword id="KW-0812">Transmembrane</keyword>
<keyword id="KW-1133">Transmembrane helix</keyword>
<keyword id="KW-0813">Transport</keyword>
<name>ATP9_TOBAC</name>
<dbReference type="EMBL" id="X04019">
    <property type="protein sequence ID" value="CAA27644.1"/>
    <property type="status" value="ALT_SEQ"/>
    <property type="molecule type" value="Genomic_DNA"/>
</dbReference>
<dbReference type="EMBL" id="X64423">
    <property type="protein sequence ID" value="CAA45770.1"/>
    <property type="molecule type" value="mRNA"/>
</dbReference>
<dbReference type="RefSeq" id="YP_173404.1">
    <property type="nucleotide sequence ID" value="NC_006581.1"/>
</dbReference>
<dbReference type="SMR" id="P60116"/>
<dbReference type="ProMEX" id="P60116"/>
<dbReference type="GeneID" id="3205336"/>
<dbReference type="KEGG" id="nta:3205336"/>
<dbReference type="OrthoDB" id="438052at2759"/>
<dbReference type="Proteomes" id="UP000084051">
    <property type="component" value="Mitochondrion MT"/>
</dbReference>
<dbReference type="GO" id="GO:0031966">
    <property type="term" value="C:mitochondrial membrane"/>
    <property type="evidence" value="ECO:0007669"/>
    <property type="project" value="UniProtKB-SubCell"/>
</dbReference>
<dbReference type="GO" id="GO:0045259">
    <property type="term" value="C:proton-transporting ATP synthase complex"/>
    <property type="evidence" value="ECO:0007669"/>
    <property type="project" value="UniProtKB-KW"/>
</dbReference>
<dbReference type="GO" id="GO:0033177">
    <property type="term" value="C:proton-transporting two-sector ATPase complex, proton-transporting domain"/>
    <property type="evidence" value="ECO:0007669"/>
    <property type="project" value="InterPro"/>
</dbReference>
<dbReference type="GO" id="GO:0005524">
    <property type="term" value="F:ATP binding"/>
    <property type="evidence" value="ECO:0007669"/>
    <property type="project" value="UniProtKB-KW"/>
</dbReference>
<dbReference type="GO" id="GO:0008289">
    <property type="term" value="F:lipid binding"/>
    <property type="evidence" value="ECO:0007669"/>
    <property type="project" value="UniProtKB-KW"/>
</dbReference>
<dbReference type="GO" id="GO:0015078">
    <property type="term" value="F:proton transmembrane transporter activity"/>
    <property type="evidence" value="ECO:0007669"/>
    <property type="project" value="InterPro"/>
</dbReference>
<dbReference type="GO" id="GO:0015986">
    <property type="term" value="P:proton motive force-driven ATP synthesis"/>
    <property type="evidence" value="ECO:0000318"/>
    <property type="project" value="GO_Central"/>
</dbReference>
<dbReference type="CDD" id="cd18182">
    <property type="entry name" value="ATP-synt_Fo_c_ATP5G3"/>
    <property type="match status" value="1"/>
</dbReference>
<dbReference type="FunFam" id="1.20.20.10:FF:000005">
    <property type="entry name" value="ATP synthase subunit 9, mitochondrial"/>
    <property type="match status" value="1"/>
</dbReference>
<dbReference type="Gene3D" id="1.20.20.10">
    <property type="entry name" value="F1F0 ATP synthase subunit C"/>
    <property type="match status" value="1"/>
</dbReference>
<dbReference type="HAMAP" id="MF_01396">
    <property type="entry name" value="ATP_synth_c_bact"/>
    <property type="match status" value="1"/>
</dbReference>
<dbReference type="InterPro" id="IPR000454">
    <property type="entry name" value="ATP_synth_F0_csu"/>
</dbReference>
<dbReference type="InterPro" id="IPR020537">
    <property type="entry name" value="ATP_synth_F0_csu_DDCD_BS"/>
</dbReference>
<dbReference type="InterPro" id="IPR038662">
    <property type="entry name" value="ATP_synth_F0_csu_sf"/>
</dbReference>
<dbReference type="InterPro" id="IPR002379">
    <property type="entry name" value="ATPase_proteolipid_c-like_dom"/>
</dbReference>
<dbReference type="InterPro" id="IPR035921">
    <property type="entry name" value="F/V-ATP_Csub_sf"/>
</dbReference>
<dbReference type="PANTHER" id="PTHR10031">
    <property type="entry name" value="ATP SYNTHASE LIPID-BINDING PROTEIN, MITOCHONDRIAL"/>
    <property type="match status" value="1"/>
</dbReference>
<dbReference type="PANTHER" id="PTHR10031:SF0">
    <property type="entry name" value="ATPASE PROTEIN 9"/>
    <property type="match status" value="1"/>
</dbReference>
<dbReference type="Pfam" id="PF00137">
    <property type="entry name" value="ATP-synt_C"/>
    <property type="match status" value="1"/>
</dbReference>
<dbReference type="PRINTS" id="PR00124">
    <property type="entry name" value="ATPASEC"/>
</dbReference>
<dbReference type="SUPFAM" id="SSF81333">
    <property type="entry name" value="F1F0 ATP synthase subunit C"/>
    <property type="match status" value="1"/>
</dbReference>
<dbReference type="PROSITE" id="PS00605">
    <property type="entry name" value="ATPASE_C"/>
    <property type="match status" value="1"/>
</dbReference>
<organism>
    <name type="scientific">Nicotiana tabacum</name>
    <name type="common">Common tobacco</name>
    <dbReference type="NCBI Taxonomy" id="4097"/>
    <lineage>
        <taxon>Eukaryota</taxon>
        <taxon>Viridiplantae</taxon>
        <taxon>Streptophyta</taxon>
        <taxon>Embryophyta</taxon>
        <taxon>Tracheophyta</taxon>
        <taxon>Spermatophyta</taxon>
        <taxon>Magnoliopsida</taxon>
        <taxon>eudicotyledons</taxon>
        <taxon>Gunneridae</taxon>
        <taxon>Pentapetalae</taxon>
        <taxon>asterids</taxon>
        <taxon>lamiids</taxon>
        <taxon>Solanales</taxon>
        <taxon>Solanaceae</taxon>
        <taxon>Nicotianoideae</taxon>
        <taxon>Nicotianeae</taxon>
        <taxon>Nicotiana</taxon>
    </lineage>
</organism>
<protein>
    <recommendedName>
        <fullName>ATP synthase subunit 9, mitochondrial</fullName>
    </recommendedName>
    <alternativeName>
        <fullName>Lipid-binding protein</fullName>
    </alternativeName>
</protein>
<accession>P60116</accession>
<accession>P05497</accession>
<accession>P05498</accession>
<feature type="chain" id="PRO_0000112225" description="ATP synthase subunit 9, mitochondrial">
    <location>
        <begin position="1"/>
        <end position="74"/>
    </location>
</feature>
<feature type="transmembrane region" description="Helical" evidence="2">
    <location>
        <begin position="8"/>
        <end position="28"/>
    </location>
</feature>
<feature type="transmembrane region" description="Helical" evidence="2">
    <location>
        <begin position="50"/>
        <end position="70"/>
    </location>
</feature>
<feature type="site" description="Reversibly protonated during proton transport" evidence="1">
    <location>
        <position position="57"/>
    </location>
</feature>
<proteinExistence type="evidence at transcript level"/>